<sequence length="314" mass="34606">MKKGINRVVLVGTGAVGCSYAYSMINQGVAEEFVLVDVNEAKAEGEAMDLSHAVPFSPSPTKVWSGSYADCKDADLVVITAGLPQKPGETRLDLVEKNTKIFKQIVRGIMDSGFDGIFLIATNPVDILTYVTWKESGLPKERVIGSGTTLDSARFRYMLGDYLDVDPRNVHAYIVGEHGDTELPVWSHATIGVQKLETILANNEQYKQEDLDKIFENVRDAAYHIIERKGATYYGIGMSLLRVTKAILNNENSVLTVSAYLEGQYGEKDAYVGVPAVINREGVREIVELELNEDEKAKFAHSVKVLKETMAPVL</sequence>
<evidence type="ECO:0000255" key="1">
    <source>
        <dbReference type="HAMAP-Rule" id="MF_00488"/>
    </source>
</evidence>
<name>LDH2_BACC1</name>
<keyword id="KW-0021">Allosteric enzyme</keyword>
<keyword id="KW-0963">Cytoplasm</keyword>
<keyword id="KW-0520">NAD</keyword>
<keyword id="KW-0560">Oxidoreductase</keyword>
<keyword id="KW-0597">Phosphoprotein</keyword>
<accession>P62048</accession>
<organism>
    <name type="scientific">Bacillus cereus (strain ATCC 10987 / NRS 248)</name>
    <dbReference type="NCBI Taxonomy" id="222523"/>
    <lineage>
        <taxon>Bacteria</taxon>
        <taxon>Bacillati</taxon>
        <taxon>Bacillota</taxon>
        <taxon>Bacilli</taxon>
        <taxon>Bacillales</taxon>
        <taxon>Bacillaceae</taxon>
        <taxon>Bacillus</taxon>
        <taxon>Bacillus cereus group</taxon>
    </lineage>
</organism>
<feature type="chain" id="PRO_0000168319" description="L-lactate dehydrogenase 2">
    <location>
        <begin position="1"/>
        <end position="314"/>
    </location>
</feature>
<feature type="active site" description="Proton acceptor" evidence="1">
    <location>
        <position position="178"/>
    </location>
</feature>
<feature type="binding site" evidence="1">
    <location>
        <position position="16"/>
    </location>
    <ligand>
        <name>NAD(+)</name>
        <dbReference type="ChEBI" id="CHEBI:57540"/>
    </ligand>
</feature>
<feature type="binding site" evidence="1">
    <location>
        <position position="37"/>
    </location>
    <ligand>
        <name>NAD(+)</name>
        <dbReference type="ChEBI" id="CHEBI:57540"/>
    </ligand>
</feature>
<feature type="binding site" evidence="1">
    <location>
        <position position="42"/>
    </location>
    <ligand>
        <name>NAD(+)</name>
        <dbReference type="ChEBI" id="CHEBI:57540"/>
    </ligand>
</feature>
<feature type="binding site" evidence="1">
    <location>
        <position position="68"/>
    </location>
    <ligand>
        <name>NAD(+)</name>
        <dbReference type="ChEBI" id="CHEBI:57540"/>
    </ligand>
</feature>
<feature type="binding site" evidence="1">
    <location>
        <begin position="82"/>
        <end position="83"/>
    </location>
    <ligand>
        <name>NAD(+)</name>
        <dbReference type="ChEBI" id="CHEBI:57540"/>
    </ligand>
</feature>
<feature type="binding site" evidence="1">
    <location>
        <position position="85"/>
    </location>
    <ligand>
        <name>substrate</name>
    </ligand>
</feature>
<feature type="binding site" evidence="1">
    <location>
        <position position="91"/>
    </location>
    <ligand>
        <name>substrate</name>
    </ligand>
</feature>
<feature type="binding site" evidence="1">
    <location>
        <begin position="121"/>
        <end position="123"/>
    </location>
    <ligand>
        <name>NAD(+)</name>
        <dbReference type="ChEBI" id="CHEBI:57540"/>
    </ligand>
</feature>
<feature type="binding site" evidence="1">
    <location>
        <begin position="123"/>
        <end position="126"/>
    </location>
    <ligand>
        <name>substrate</name>
    </ligand>
</feature>
<feature type="binding site" evidence="1">
    <location>
        <position position="146"/>
    </location>
    <ligand>
        <name>NAD(+)</name>
        <dbReference type="ChEBI" id="CHEBI:57540"/>
    </ligand>
</feature>
<feature type="binding site" evidence="1">
    <location>
        <begin position="151"/>
        <end position="154"/>
    </location>
    <ligand>
        <name>substrate</name>
    </ligand>
</feature>
<feature type="binding site" evidence="1">
    <location>
        <position position="156"/>
    </location>
    <ligand>
        <name>beta-D-fructose 1,6-bisphosphate</name>
        <dbReference type="ChEBI" id="CHEBI:32966"/>
        <note>allosteric activator</note>
    </ligand>
</feature>
<feature type="binding site" evidence="1">
    <location>
        <position position="171"/>
    </location>
    <ligand>
        <name>beta-D-fructose 1,6-bisphosphate</name>
        <dbReference type="ChEBI" id="CHEBI:32966"/>
        <note>allosteric activator</note>
    </ligand>
</feature>
<feature type="binding site" evidence="1">
    <location>
        <position position="232"/>
    </location>
    <ligand>
        <name>substrate</name>
    </ligand>
</feature>
<feature type="modified residue" description="Phosphotyrosine" evidence="1">
    <location>
        <position position="223"/>
    </location>
</feature>
<gene>
    <name evidence="1" type="primary">ldh2</name>
    <name type="ordered locus">BCE_5032</name>
</gene>
<proteinExistence type="inferred from homology"/>
<reference key="1">
    <citation type="journal article" date="2004" name="Nucleic Acids Res.">
        <title>The genome sequence of Bacillus cereus ATCC 10987 reveals metabolic adaptations and a large plasmid related to Bacillus anthracis pXO1.</title>
        <authorList>
            <person name="Rasko D.A."/>
            <person name="Ravel J."/>
            <person name="Oekstad O.A."/>
            <person name="Helgason E."/>
            <person name="Cer R.Z."/>
            <person name="Jiang L."/>
            <person name="Shores K.A."/>
            <person name="Fouts D.E."/>
            <person name="Tourasse N.J."/>
            <person name="Angiuoli S.V."/>
            <person name="Kolonay J.F."/>
            <person name="Nelson W.C."/>
            <person name="Kolstoe A.-B."/>
            <person name="Fraser C.M."/>
            <person name="Read T.D."/>
        </authorList>
    </citation>
    <scope>NUCLEOTIDE SEQUENCE [LARGE SCALE GENOMIC DNA]</scope>
    <source>
        <strain>ATCC 10987 / NRS 248</strain>
    </source>
</reference>
<dbReference type="EC" id="1.1.1.27" evidence="1"/>
<dbReference type="EMBL" id="AE017194">
    <property type="protein sequence ID" value="AAS43933.1"/>
    <property type="molecule type" value="Genomic_DNA"/>
</dbReference>
<dbReference type="SMR" id="P62048"/>
<dbReference type="KEGG" id="bca:BCE_5032"/>
<dbReference type="HOGENOM" id="CLU_045401_1_1_9"/>
<dbReference type="UniPathway" id="UPA00554">
    <property type="reaction ID" value="UER00611"/>
</dbReference>
<dbReference type="Proteomes" id="UP000002527">
    <property type="component" value="Chromosome"/>
</dbReference>
<dbReference type="GO" id="GO:0005737">
    <property type="term" value="C:cytoplasm"/>
    <property type="evidence" value="ECO:0007669"/>
    <property type="project" value="UniProtKB-SubCell"/>
</dbReference>
<dbReference type="GO" id="GO:0004459">
    <property type="term" value="F:L-lactate dehydrogenase activity"/>
    <property type="evidence" value="ECO:0007669"/>
    <property type="project" value="UniProtKB-UniRule"/>
</dbReference>
<dbReference type="GO" id="GO:0006096">
    <property type="term" value="P:glycolytic process"/>
    <property type="evidence" value="ECO:0007669"/>
    <property type="project" value="UniProtKB-UniRule"/>
</dbReference>
<dbReference type="GO" id="GO:0006089">
    <property type="term" value="P:lactate metabolic process"/>
    <property type="evidence" value="ECO:0007669"/>
    <property type="project" value="TreeGrafter"/>
</dbReference>
<dbReference type="CDD" id="cd05291">
    <property type="entry name" value="HicDH_like"/>
    <property type="match status" value="1"/>
</dbReference>
<dbReference type="FunFam" id="3.90.110.10:FF:000005">
    <property type="entry name" value="L-lactate dehydrogenase"/>
    <property type="match status" value="1"/>
</dbReference>
<dbReference type="FunFam" id="3.40.50.720:FF:000018">
    <property type="entry name" value="Malate dehydrogenase"/>
    <property type="match status" value="1"/>
</dbReference>
<dbReference type="Gene3D" id="3.90.110.10">
    <property type="entry name" value="Lactate dehydrogenase/glycoside hydrolase, family 4, C-terminal"/>
    <property type="match status" value="1"/>
</dbReference>
<dbReference type="Gene3D" id="3.40.50.720">
    <property type="entry name" value="NAD(P)-binding Rossmann-like Domain"/>
    <property type="match status" value="1"/>
</dbReference>
<dbReference type="HAMAP" id="MF_00488">
    <property type="entry name" value="Lactate_dehydrog"/>
    <property type="match status" value="1"/>
</dbReference>
<dbReference type="InterPro" id="IPR001557">
    <property type="entry name" value="L-lactate/malate_DH"/>
</dbReference>
<dbReference type="InterPro" id="IPR011304">
    <property type="entry name" value="L-lactate_DH"/>
</dbReference>
<dbReference type="InterPro" id="IPR018177">
    <property type="entry name" value="L-lactate_DH_AS"/>
</dbReference>
<dbReference type="InterPro" id="IPR022383">
    <property type="entry name" value="Lactate/malate_DH_C"/>
</dbReference>
<dbReference type="InterPro" id="IPR001236">
    <property type="entry name" value="Lactate/malate_DH_N"/>
</dbReference>
<dbReference type="InterPro" id="IPR015955">
    <property type="entry name" value="Lactate_DH/Glyco_Ohase_4_C"/>
</dbReference>
<dbReference type="InterPro" id="IPR036291">
    <property type="entry name" value="NAD(P)-bd_dom_sf"/>
</dbReference>
<dbReference type="NCBIfam" id="TIGR01771">
    <property type="entry name" value="L-LDH-NAD"/>
    <property type="match status" value="1"/>
</dbReference>
<dbReference type="NCBIfam" id="NF000824">
    <property type="entry name" value="PRK00066.1"/>
    <property type="match status" value="1"/>
</dbReference>
<dbReference type="NCBIfam" id="NF004863">
    <property type="entry name" value="PRK06223.1"/>
    <property type="match status" value="1"/>
</dbReference>
<dbReference type="PANTHER" id="PTHR43128">
    <property type="entry name" value="L-2-HYDROXYCARBOXYLATE DEHYDROGENASE (NAD(P)(+))"/>
    <property type="match status" value="1"/>
</dbReference>
<dbReference type="PANTHER" id="PTHR43128:SF16">
    <property type="entry name" value="L-LACTATE DEHYDROGENASE"/>
    <property type="match status" value="1"/>
</dbReference>
<dbReference type="Pfam" id="PF02866">
    <property type="entry name" value="Ldh_1_C"/>
    <property type="match status" value="1"/>
</dbReference>
<dbReference type="Pfam" id="PF00056">
    <property type="entry name" value="Ldh_1_N"/>
    <property type="match status" value="1"/>
</dbReference>
<dbReference type="PIRSF" id="PIRSF000102">
    <property type="entry name" value="Lac_mal_DH"/>
    <property type="match status" value="1"/>
</dbReference>
<dbReference type="PRINTS" id="PR00086">
    <property type="entry name" value="LLDHDRGNASE"/>
</dbReference>
<dbReference type="SUPFAM" id="SSF56327">
    <property type="entry name" value="LDH C-terminal domain-like"/>
    <property type="match status" value="1"/>
</dbReference>
<dbReference type="SUPFAM" id="SSF51735">
    <property type="entry name" value="NAD(P)-binding Rossmann-fold domains"/>
    <property type="match status" value="1"/>
</dbReference>
<dbReference type="PROSITE" id="PS00064">
    <property type="entry name" value="L_LDH"/>
    <property type="match status" value="1"/>
</dbReference>
<comment type="function">
    <text evidence="1">Catalyzes the conversion of lactate to pyruvate.</text>
</comment>
<comment type="catalytic activity">
    <reaction evidence="1">
        <text>(S)-lactate + NAD(+) = pyruvate + NADH + H(+)</text>
        <dbReference type="Rhea" id="RHEA:23444"/>
        <dbReference type="ChEBI" id="CHEBI:15361"/>
        <dbReference type="ChEBI" id="CHEBI:15378"/>
        <dbReference type="ChEBI" id="CHEBI:16651"/>
        <dbReference type="ChEBI" id="CHEBI:57540"/>
        <dbReference type="ChEBI" id="CHEBI:57945"/>
        <dbReference type="EC" id="1.1.1.27"/>
    </reaction>
</comment>
<comment type="activity regulation">
    <text evidence="1">Allosterically activated by fructose 1,6-bisphosphate (FBP).</text>
</comment>
<comment type="pathway">
    <text evidence="1">Fermentation; pyruvate fermentation to lactate; (S)-lactate from pyruvate: step 1/1.</text>
</comment>
<comment type="subunit">
    <text evidence="1">Homotetramer.</text>
</comment>
<comment type="subcellular location">
    <subcellularLocation>
        <location evidence="1">Cytoplasm</location>
    </subcellularLocation>
</comment>
<comment type="similarity">
    <text evidence="1">Belongs to the LDH/MDH superfamily. LDH family.</text>
</comment>
<protein>
    <recommendedName>
        <fullName evidence="1">L-lactate dehydrogenase 2</fullName>
        <shortName evidence="1">L-LDH 2</shortName>
        <ecNumber evidence="1">1.1.1.27</ecNumber>
    </recommendedName>
</protein>